<feature type="chain" id="PRO_0000244525" description="Dynein light chain Tctex-type 3">
    <location>
        <begin position="1"/>
        <end position="116"/>
    </location>
</feature>
<feature type="modified residue" description="3'-nitrotyrosine" evidence="2">
    <location>
        <position position="4"/>
    </location>
</feature>
<organism>
    <name type="scientific">Pongo abelii</name>
    <name type="common">Sumatran orangutan</name>
    <name type="synonym">Pongo pygmaeus abelii</name>
    <dbReference type="NCBI Taxonomy" id="9601"/>
    <lineage>
        <taxon>Eukaryota</taxon>
        <taxon>Metazoa</taxon>
        <taxon>Chordata</taxon>
        <taxon>Craniata</taxon>
        <taxon>Vertebrata</taxon>
        <taxon>Euteleostomi</taxon>
        <taxon>Mammalia</taxon>
        <taxon>Eutheria</taxon>
        <taxon>Euarchontoglires</taxon>
        <taxon>Primates</taxon>
        <taxon>Haplorrhini</taxon>
        <taxon>Catarrhini</taxon>
        <taxon>Hominidae</taxon>
        <taxon>Pongo</taxon>
    </lineage>
</organism>
<dbReference type="EMBL" id="CR926081">
    <property type="protein sequence ID" value="CAI29708.1"/>
    <property type="molecule type" value="mRNA"/>
</dbReference>
<dbReference type="RefSeq" id="NP_001127114.1">
    <property type="nucleotide sequence ID" value="NM_001133642.1"/>
</dbReference>
<dbReference type="SMR" id="Q5NVF5"/>
<dbReference type="FunCoup" id="Q5NVF5">
    <property type="interactions" value="94"/>
</dbReference>
<dbReference type="STRING" id="9601.ENSPPYP00000022651"/>
<dbReference type="Ensembl" id="ENSPPYT00000042772.1">
    <property type="protein sequence ID" value="ENSPPYP00000025038.1"/>
    <property type="gene ID" value="ENSPPYG00000020241.3"/>
</dbReference>
<dbReference type="GeneID" id="100174155"/>
<dbReference type="KEGG" id="pon:100174155"/>
<dbReference type="CTD" id="6990"/>
<dbReference type="eggNOG" id="KOG4081">
    <property type="taxonomic scope" value="Eukaryota"/>
</dbReference>
<dbReference type="GeneTree" id="ENSGT00940000155009"/>
<dbReference type="HOGENOM" id="CLU_097204_7_0_1"/>
<dbReference type="InParanoid" id="Q5NVF5"/>
<dbReference type="OrthoDB" id="10059120at2759"/>
<dbReference type="TreeFam" id="TF313904"/>
<dbReference type="Proteomes" id="UP000001595">
    <property type="component" value="Chromosome X"/>
</dbReference>
<dbReference type="GO" id="GO:0005737">
    <property type="term" value="C:cytoplasm"/>
    <property type="evidence" value="ECO:0007669"/>
    <property type="project" value="UniProtKB-KW"/>
</dbReference>
<dbReference type="GO" id="GO:0005868">
    <property type="term" value="C:cytoplasmic dynein complex"/>
    <property type="evidence" value="ECO:0000250"/>
    <property type="project" value="UniProtKB"/>
</dbReference>
<dbReference type="GO" id="GO:0000776">
    <property type="term" value="C:kinetochore"/>
    <property type="evidence" value="ECO:0007669"/>
    <property type="project" value="UniProtKB-KW"/>
</dbReference>
<dbReference type="GO" id="GO:0005874">
    <property type="term" value="C:microtubule"/>
    <property type="evidence" value="ECO:0007669"/>
    <property type="project" value="UniProtKB-KW"/>
</dbReference>
<dbReference type="GO" id="GO:0005634">
    <property type="term" value="C:nucleus"/>
    <property type="evidence" value="ECO:0007669"/>
    <property type="project" value="UniProtKB-SubCell"/>
</dbReference>
<dbReference type="GO" id="GO:0045505">
    <property type="term" value="F:dynein intermediate chain binding"/>
    <property type="evidence" value="ECO:0007669"/>
    <property type="project" value="TreeGrafter"/>
</dbReference>
<dbReference type="GO" id="GO:0051301">
    <property type="term" value="P:cell division"/>
    <property type="evidence" value="ECO:0007669"/>
    <property type="project" value="UniProtKB-KW"/>
</dbReference>
<dbReference type="GO" id="GO:0007018">
    <property type="term" value="P:microtubule-based movement"/>
    <property type="evidence" value="ECO:0007669"/>
    <property type="project" value="TreeGrafter"/>
</dbReference>
<dbReference type="GO" id="GO:0007346">
    <property type="term" value="P:regulation of mitotic cell cycle"/>
    <property type="evidence" value="ECO:0000250"/>
    <property type="project" value="UniProtKB"/>
</dbReference>
<dbReference type="CDD" id="cd21463">
    <property type="entry name" value="DLC-like_DYNLT3"/>
    <property type="match status" value="1"/>
</dbReference>
<dbReference type="FunFam" id="3.30.1140.40:FF:000002">
    <property type="entry name" value="Dynein light chain Tctex-type 3"/>
    <property type="match status" value="1"/>
</dbReference>
<dbReference type="Gene3D" id="3.30.1140.40">
    <property type="entry name" value="Tctex-1"/>
    <property type="match status" value="1"/>
</dbReference>
<dbReference type="InterPro" id="IPR005334">
    <property type="entry name" value="Tctex-1-like"/>
</dbReference>
<dbReference type="InterPro" id="IPR038586">
    <property type="entry name" value="Tctex-1-like_sf"/>
</dbReference>
<dbReference type="PANTHER" id="PTHR21255:SF20">
    <property type="entry name" value="DYNEIN LIGHT CHAIN TCTEX-TYPE 3"/>
    <property type="match status" value="1"/>
</dbReference>
<dbReference type="PANTHER" id="PTHR21255">
    <property type="entry name" value="T-COMPLEX-ASSOCIATED-TESTIS-EXPRESSED 1/ DYNEIN LIGHT CHAIN"/>
    <property type="match status" value="1"/>
</dbReference>
<dbReference type="Pfam" id="PF03645">
    <property type="entry name" value="Tctex-1"/>
    <property type="match status" value="1"/>
</dbReference>
<proteinExistence type="inferred from homology"/>
<evidence type="ECO:0000250" key="1"/>
<evidence type="ECO:0000250" key="2">
    <source>
        <dbReference type="UniProtKB" id="P56387"/>
    </source>
</evidence>
<evidence type="ECO:0000305" key="3"/>
<keyword id="KW-0131">Cell cycle</keyword>
<keyword id="KW-0132">Cell division</keyword>
<keyword id="KW-0137">Centromere</keyword>
<keyword id="KW-0158">Chromosome</keyword>
<keyword id="KW-0963">Cytoplasm</keyword>
<keyword id="KW-0206">Cytoskeleton</keyword>
<keyword id="KW-0243">Dynein</keyword>
<keyword id="KW-0995">Kinetochore</keyword>
<keyword id="KW-0493">Microtubule</keyword>
<keyword id="KW-0498">Mitosis</keyword>
<keyword id="KW-0505">Motor protein</keyword>
<keyword id="KW-0944">Nitration</keyword>
<keyword id="KW-0539">Nucleus</keyword>
<keyword id="KW-1185">Reference proteome</keyword>
<keyword id="KW-0813">Transport</keyword>
<protein>
    <recommendedName>
        <fullName>Dynein light chain Tctex-type 3</fullName>
    </recommendedName>
</protein>
<accession>Q5NVF5</accession>
<reference key="1">
    <citation type="submission" date="2004-11" db="EMBL/GenBank/DDBJ databases">
        <authorList>
            <consortium name="The German cDNA consortium"/>
        </authorList>
    </citation>
    <scope>NUCLEOTIDE SEQUENCE [LARGE SCALE MRNA]</scope>
    <source>
        <tissue>Brain cortex</tissue>
    </source>
</reference>
<gene>
    <name type="primary">DYNLT3</name>
</gene>
<sequence length="116" mass="13062">MEEYHRHCDEVGFNAEEAHNIVKECVDGVLGGEDYNHNNINQWTASIVEQSLTHLVKLGKAYKYIVTCAVVQKSAYGFHTASSCFWDTTSDGTCTVRWENRTMNCIVNVFAIAIVL</sequence>
<name>DYLT3_PONAB</name>
<comment type="function">
    <text evidence="1">Acts as one of several non-catalytic accessory components of the cytoplasmic dynein 1 complex that are thought to be involved in linking dynein to cargos and to adapter proteins that regulate dynein function. Cytoplasmic dynein 1 acts as a motor for the intracellular retrograde motility of vesicles and organelles along microtubules. Probably binds BUB3 as part of transport cargo. Required for the efficient progression through mitosis (By similarity).</text>
</comment>
<comment type="subunit">
    <text evidence="1">Homodimer. The cytoplasmic dynein 1 complex consists of two catalytic heavy chains (HCs) and a number of non-catalytic subunits presented by intermediate chains (ICs), light intermediate chains (LICs) and light chains (LCs); the composition seems to vary in respect to the IC, LIC and LC composition. The heavy chain homodimer serves as a scaffold for the probable homodimeric assembly of the respective non-catalytic subunits. The ICs and LICs bind directly to the HC dimer and the LCs assemble on the IC dimer. DYNLT1 and DYNLT3 compete for association with dynein IC (DYNC1I1 or DYNC1I2). Self-associates. Interacts with DYNC1I1 and DYNC1I2. Interacts with BUB3. Interacts with SATB1 in nucleus to form complex with matrix attachment regions (MARs) of DNA (By similarity).</text>
</comment>
<comment type="subcellular location">
    <subcellularLocation>
        <location evidence="1">Nucleus</location>
    </subcellularLocation>
    <subcellularLocation>
        <location evidence="1">Cytoplasm</location>
        <location evidence="1">Cytoskeleton</location>
    </subcellularLocation>
    <subcellularLocation>
        <location evidence="1">Chromosome</location>
        <location evidence="1">Centromere</location>
        <location evidence="1">Kinetochore</location>
    </subcellularLocation>
</comment>
<comment type="similarity">
    <text evidence="3">Belongs to the dynein light chain Tctex-type family.</text>
</comment>